<gene>
    <name evidence="1" type="primary">pfkA</name>
    <name type="ordered locus">CTC_02490</name>
</gene>
<accession>Q890Z2</accession>
<proteinExistence type="inferred from homology"/>
<name>PFKA_CLOTE</name>
<evidence type="ECO:0000255" key="1">
    <source>
        <dbReference type="HAMAP-Rule" id="MF_00339"/>
    </source>
</evidence>
<protein>
    <recommendedName>
        <fullName evidence="1">ATP-dependent 6-phosphofructokinase</fullName>
        <shortName evidence="1">ATP-PFK</shortName>
        <shortName evidence="1">Phosphofructokinase</shortName>
        <ecNumber evidence="1">2.7.1.11</ecNumber>
    </recommendedName>
    <alternativeName>
        <fullName evidence="1">Phosphohexokinase</fullName>
    </alternativeName>
</protein>
<organism>
    <name type="scientific">Clostridium tetani (strain Massachusetts / E88)</name>
    <dbReference type="NCBI Taxonomy" id="212717"/>
    <lineage>
        <taxon>Bacteria</taxon>
        <taxon>Bacillati</taxon>
        <taxon>Bacillota</taxon>
        <taxon>Clostridia</taxon>
        <taxon>Eubacteriales</taxon>
        <taxon>Clostridiaceae</taxon>
        <taxon>Clostridium</taxon>
    </lineage>
</organism>
<reference key="1">
    <citation type="journal article" date="2003" name="Proc. Natl. Acad. Sci. U.S.A.">
        <title>The genome sequence of Clostridium tetani, the causative agent of tetanus disease.</title>
        <authorList>
            <person name="Brueggemann H."/>
            <person name="Baeumer S."/>
            <person name="Fricke W.F."/>
            <person name="Wiezer A."/>
            <person name="Liesegang H."/>
            <person name="Decker I."/>
            <person name="Herzberg C."/>
            <person name="Martinez-Arias R."/>
            <person name="Merkl R."/>
            <person name="Henne A."/>
            <person name="Gottschalk G."/>
        </authorList>
    </citation>
    <scope>NUCLEOTIDE SEQUENCE [LARGE SCALE GENOMIC DNA]</scope>
    <source>
        <strain>Massachusetts / E88</strain>
    </source>
</reference>
<comment type="function">
    <text evidence="1">Catalyzes the phosphorylation of D-fructose 6-phosphate to fructose 1,6-bisphosphate by ATP, the first committing step of glycolysis.</text>
</comment>
<comment type="catalytic activity">
    <reaction evidence="1">
        <text>beta-D-fructose 6-phosphate + ATP = beta-D-fructose 1,6-bisphosphate + ADP + H(+)</text>
        <dbReference type="Rhea" id="RHEA:16109"/>
        <dbReference type="ChEBI" id="CHEBI:15378"/>
        <dbReference type="ChEBI" id="CHEBI:30616"/>
        <dbReference type="ChEBI" id="CHEBI:32966"/>
        <dbReference type="ChEBI" id="CHEBI:57634"/>
        <dbReference type="ChEBI" id="CHEBI:456216"/>
        <dbReference type="EC" id="2.7.1.11"/>
    </reaction>
</comment>
<comment type="cofactor">
    <cofactor evidence="1">
        <name>Mg(2+)</name>
        <dbReference type="ChEBI" id="CHEBI:18420"/>
    </cofactor>
</comment>
<comment type="activity regulation">
    <text evidence="1">Allosterically activated by ADP and other diphosphonucleosides, and allosterically inhibited by phosphoenolpyruvate.</text>
</comment>
<comment type="pathway">
    <text evidence="1">Carbohydrate degradation; glycolysis; D-glyceraldehyde 3-phosphate and glycerone phosphate from D-glucose: step 3/4.</text>
</comment>
<comment type="subunit">
    <text evidence="1">Homotetramer.</text>
</comment>
<comment type="subcellular location">
    <subcellularLocation>
        <location evidence="1">Cytoplasm</location>
    </subcellularLocation>
</comment>
<comment type="similarity">
    <text evidence="1">Belongs to the phosphofructokinase type A (PFKA) family. ATP-dependent PFK group I subfamily. Prokaryotic clade 'B1' sub-subfamily.</text>
</comment>
<sequence>MRKIAVLTSGGDAPGMNAAIRAVVRTGLDKGITVLGIERGFDGLLNGEIFEMTRRSVADIIQRGGTILRTARSEEFKTEEGQKKATDILRVFGVEGLVVIGGDGSFQGAKSLSELGVKTIGIPGTIDNDLAYTDYTIGFDTAVNTVLDAINKLRDTSTSHGRASVVEVMGRNCGDIALYAGLAGGAESIIVPELRFDIDKLCKTILEGKKNGKMHNLIIVAEGAGKANDIAKTIEKVTGVGTRATVLGHIQRGGSPTANDRILASRMGNRAVELLLEEKSSRVVGINDNRIVDMDIHEALSIEGKFDEKLYEIAKALSY</sequence>
<dbReference type="EC" id="2.7.1.11" evidence="1"/>
<dbReference type="EMBL" id="AE015927">
    <property type="protein sequence ID" value="AAO36953.1"/>
    <property type="molecule type" value="Genomic_DNA"/>
</dbReference>
<dbReference type="RefSeq" id="WP_011100614.1">
    <property type="nucleotide sequence ID" value="NC_004557.1"/>
</dbReference>
<dbReference type="SMR" id="Q890Z2"/>
<dbReference type="STRING" id="212717.CTC_02490"/>
<dbReference type="GeneID" id="24254134"/>
<dbReference type="KEGG" id="ctc:CTC_02490"/>
<dbReference type="HOGENOM" id="CLU_020655_0_1_9"/>
<dbReference type="OrthoDB" id="9802503at2"/>
<dbReference type="UniPathway" id="UPA00109">
    <property type="reaction ID" value="UER00182"/>
</dbReference>
<dbReference type="Proteomes" id="UP000001412">
    <property type="component" value="Chromosome"/>
</dbReference>
<dbReference type="GO" id="GO:0005945">
    <property type="term" value="C:6-phosphofructokinase complex"/>
    <property type="evidence" value="ECO:0007669"/>
    <property type="project" value="TreeGrafter"/>
</dbReference>
<dbReference type="GO" id="GO:0003872">
    <property type="term" value="F:6-phosphofructokinase activity"/>
    <property type="evidence" value="ECO:0007669"/>
    <property type="project" value="UniProtKB-UniRule"/>
</dbReference>
<dbReference type="GO" id="GO:0016208">
    <property type="term" value="F:AMP binding"/>
    <property type="evidence" value="ECO:0007669"/>
    <property type="project" value="TreeGrafter"/>
</dbReference>
<dbReference type="GO" id="GO:0005524">
    <property type="term" value="F:ATP binding"/>
    <property type="evidence" value="ECO:0007669"/>
    <property type="project" value="UniProtKB-KW"/>
</dbReference>
<dbReference type="GO" id="GO:0070095">
    <property type="term" value="F:fructose-6-phosphate binding"/>
    <property type="evidence" value="ECO:0007669"/>
    <property type="project" value="TreeGrafter"/>
</dbReference>
<dbReference type="GO" id="GO:0042802">
    <property type="term" value="F:identical protein binding"/>
    <property type="evidence" value="ECO:0007669"/>
    <property type="project" value="TreeGrafter"/>
</dbReference>
<dbReference type="GO" id="GO:0046872">
    <property type="term" value="F:metal ion binding"/>
    <property type="evidence" value="ECO:0007669"/>
    <property type="project" value="UniProtKB-KW"/>
</dbReference>
<dbReference type="GO" id="GO:0048029">
    <property type="term" value="F:monosaccharide binding"/>
    <property type="evidence" value="ECO:0007669"/>
    <property type="project" value="TreeGrafter"/>
</dbReference>
<dbReference type="GO" id="GO:0061621">
    <property type="term" value="P:canonical glycolysis"/>
    <property type="evidence" value="ECO:0007669"/>
    <property type="project" value="TreeGrafter"/>
</dbReference>
<dbReference type="GO" id="GO:0030388">
    <property type="term" value="P:fructose 1,6-bisphosphate metabolic process"/>
    <property type="evidence" value="ECO:0007669"/>
    <property type="project" value="TreeGrafter"/>
</dbReference>
<dbReference type="GO" id="GO:0006002">
    <property type="term" value="P:fructose 6-phosphate metabolic process"/>
    <property type="evidence" value="ECO:0007669"/>
    <property type="project" value="InterPro"/>
</dbReference>
<dbReference type="FunFam" id="3.40.50.450:FF:000001">
    <property type="entry name" value="ATP-dependent 6-phosphofructokinase"/>
    <property type="match status" value="1"/>
</dbReference>
<dbReference type="FunFam" id="3.40.50.460:FF:000002">
    <property type="entry name" value="ATP-dependent 6-phosphofructokinase"/>
    <property type="match status" value="1"/>
</dbReference>
<dbReference type="Gene3D" id="3.40.50.450">
    <property type="match status" value="1"/>
</dbReference>
<dbReference type="Gene3D" id="3.40.50.460">
    <property type="entry name" value="Phosphofructokinase domain"/>
    <property type="match status" value="1"/>
</dbReference>
<dbReference type="HAMAP" id="MF_00339">
    <property type="entry name" value="Phosphofructokinase_I_B1"/>
    <property type="match status" value="1"/>
</dbReference>
<dbReference type="InterPro" id="IPR022953">
    <property type="entry name" value="ATP_PFK"/>
</dbReference>
<dbReference type="InterPro" id="IPR012003">
    <property type="entry name" value="ATP_PFK_prok-type"/>
</dbReference>
<dbReference type="InterPro" id="IPR012828">
    <property type="entry name" value="PFKA_ATP_prok"/>
</dbReference>
<dbReference type="InterPro" id="IPR015912">
    <property type="entry name" value="Phosphofructokinase_CS"/>
</dbReference>
<dbReference type="InterPro" id="IPR000023">
    <property type="entry name" value="Phosphofructokinase_dom"/>
</dbReference>
<dbReference type="InterPro" id="IPR035966">
    <property type="entry name" value="PKF_sf"/>
</dbReference>
<dbReference type="NCBIfam" id="TIGR02482">
    <property type="entry name" value="PFKA_ATP"/>
    <property type="match status" value="1"/>
</dbReference>
<dbReference type="NCBIfam" id="NF002872">
    <property type="entry name" value="PRK03202.1"/>
    <property type="match status" value="1"/>
</dbReference>
<dbReference type="PANTHER" id="PTHR13697:SF4">
    <property type="entry name" value="ATP-DEPENDENT 6-PHOSPHOFRUCTOKINASE"/>
    <property type="match status" value="1"/>
</dbReference>
<dbReference type="PANTHER" id="PTHR13697">
    <property type="entry name" value="PHOSPHOFRUCTOKINASE"/>
    <property type="match status" value="1"/>
</dbReference>
<dbReference type="Pfam" id="PF00365">
    <property type="entry name" value="PFK"/>
    <property type="match status" value="1"/>
</dbReference>
<dbReference type="PIRSF" id="PIRSF000532">
    <property type="entry name" value="ATP_PFK_prok"/>
    <property type="match status" value="1"/>
</dbReference>
<dbReference type="PRINTS" id="PR00476">
    <property type="entry name" value="PHFRCTKINASE"/>
</dbReference>
<dbReference type="SUPFAM" id="SSF53784">
    <property type="entry name" value="Phosphofructokinase"/>
    <property type="match status" value="1"/>
</dbReference>
<dbReference type="PROSITE" id="PS00433">
    <property type="entry name" value="PHOSPHOFRUCTOKINASE"/>
    <property type="match status" value="1"/>
</dbReference>
<feature type="chain" id="PRO_0000111946" description="ATP-dependent 6-phosphofructokinase">
    <location>
        <begin position="1"/>
        <end position="319"/>
    </location>
</feature>
<feature type="active site" description="Proton acceptor" evidence="1">
    <location>
        <position position="127"/>
    </location>
</feature>
<feature type="binding site" evidence="1">
    <location>
        <position position="11"/>
    </location>
    <ligand>
        <name>ATP</name>
        <dbReference type="ChEBI" id="CHEBI:30616"/>
    </ligand>
</feature>
<feature type="binding site" evidence="1">
    <location>
        <begin position="21"/>
        <end position="25"/>
    </location>
    <ligand>
        <name>ADP</name>
        <dbReference type="ChEBI" id="CHEBI:456216"/>
        <note>allosteric activator; ligand shared between dimeric partners</note>
    </ligand>
</feature>
<feature type="binding site" evidence="1">
    <location>
        <begin position="72"/>
        <end position="73"/>
    </location>
    <ligand>
        <name>ATP</name>
        <dbReference type="ChEBI" id="CHEBI:30616"/>
    </ligand>
</feature>
<feature type="binding site" evidence="1">
    <location>
        <begin position="102"/>
        <end position="105"/>
    </location>
    <ligand>
        <name>ATP</name>
        <dbReference type="ChEBI" id="CHEBI:30616"/>
    </ligand>
</feature>
<feature type="binding site" evidence="1">
    <location>
        <position position="103"/>
    </location>
    <ligand>
        <name>Mg(2+)</name>
        <dbReference type="ChEBI" id="CHEBI:18420"/>
        <note>catalytic</note>
    </ligand>
</feature>
<feature type="binding site" description="in other chain" evidence="1">
    <location>
        <begin position="125"/>
        <end position="127"/>
    </location>
    <ligand>
        <name>substrate</name>
        <note>ligand shared between dimeric partners</note>
    </ligand>
</feature>
<feature type="binding site" description="in other chain" evidence="1">
    <location>
        <position position="154"/>
    </location>
    <ligand>
        <name>ADP</name>
        <dbReference type="ChEBI" id="CHEBI:456216"/>
        <note>allosteric activator; ligand shared between dimeric partners</note>
    </ligand>
</feature>
<feature type="binding site" evidence="1">
    <location>
        <position position="162"/>
    </location>
    <ligand>
        <name>substrate</name>
        <note>ligand shared between dimeric partners</note>
    </ligand>
</feature>
<feature type="binding site" description="in other chain" evidence="1">
    <location>
        <begin position="169"/>
        <end position="171"/>
    </location>
    <ligand>
        <name>substrate</name>
        <note>ligand shared between dimeric partners</note>
    </ligand>
</feature>
<feature type="binding site" description="in other chain" evidence="1">
    <location>
        <begin position="185"/>
        <end position="187"/>
    </location>
    <ligand>
        <name>ADP</name>
        <dbReference type="ChEBI" id="CHEBI:456216"/>
        <note>allosteric activator; ligand shared between dimeric partners</note>
    </ligand>
</feature>
<feature type="binding site" description="in other chain" evidence="1">
    <location>
        <begin position="213"/>
        <end position="215"/>
    </location>
    <ligand>
        <name>ADP</name>
        <dbReference type="ChEBI" id="CHEBI:456216"/>
        <note>allosteric activator; ligand shared between dimeric partners</note>
    </ligand>
</feature>
<feature type="binding site" description="in other chain" evidence="1">
    <location>
        <position position="222"/>
    </location>
    <ligand>
        <name>substrate</name>
        <note>ligand shared between dimeric partners</note>
    </ligand>
</feature>
<feature type="binding site" evidence="1">
    <location>
        <position position="243"/>
    </location>
    <ligand>
        <name>substrate</name>
        <note>ligand shared between dimeric partners</note>
    </ligand>
</feature>
<feature type="binding site" description="in other chain" evidence="1">
    <location>
        <begin position="249"/>
        <end position="252"/>
    </location>
    <ligand>
        <name>substrate</name>
        <note>ligand shared between dimeric partners</note>
    </ligand>
</feature>
<keyword id="KW-0021">Allosteric enzyme</keyword>
<keyword id="KW-0067">ATP-binding</keyword>
<keyword id="KW-0963">Cytoplasm</keyword>
<keyword id="KW-0324">Glycolysis</keyword>
<keyword id="KW-0418">Kinase</keyword>
<keyword id="KW-0460">Magnesium</keyword>
<keyword id="KW-0479">Metal-binding</keyword>
<keyword id="KW-0547">Nucleotide-binding</keyword>
<keyword id="KW-1185">Reference proteome</keyword>
<keyword id="KW-0808">Transferase</keyword>